<dbReference type="EMBL" id="CR382136">
    <property type="protein sequence ID" value="CAG86698.1"/>
    <property type="molecule type" value="Genomic_DNA"/>
</dbReference>
<dbReference type="RefSeq" id="XP_458566.1">
    <property type="nucleotide sequence ID" value="XM_458566.1"/>
</dbReference>
<dbReference type="SMR" id="Q6BTA4"/>
<dbReference type="FunCoup" id="Q6BTA4">
    <property type="interactions" value="1463"/>
</dbReference>
<dbReference type="STRING" id="284592.Q6BTA4"/>
<dbReference type="GeneID" id="2900856"/>
<dbReference type="KEGG" id="dha:DEHA2D02266g"/>
<dbReference type="VEuPathDB" id="FungiDB:DEHA2D02266g"/>
<dbReference type="eggNOG" id="KOG3184">
    <property type="taxonomic scope" value="Eukaryota"/>
</dbReference>
<dbReference type="HOGENOM" id="CLU_055156_0_2_1"/>
<dbReference type="InParanoid" id="Q6BTA4"/>
<dbReference type="OMA" id="SYYVDAQ"/>
<dbReference type="OrthoDB" id="28644at2759"/>
<dbReference type="Proteomes" id="UP000000599">
    <property type="component" value="Chromosome D"/>
</dbReference>
<dbReference type="GO" id="GO:0022625">
    <property type="term" value="C:cytosolic large ribosomal subunit"/>
    <property type="evidence" value="ECO:0007669"/>
    <property type="project" value="TreeGrafter"/>
</dbReference>
<dbReference type="GO" id="GO:0003723">
    <property type="term" value="F:RNA binding"/>
    <property type="evidence" value="ECO:0007669"/>
    <property type="project" value="InterPro"/>
</dbReference>
<dbReference type="GO" id="GO:0003735">
    <property type="term" value="F:structural constituent of ribosome"/>
    <property type="evidence" value="ECO:0007669"/>
    <property type="project" value="InterPro"/>
</dbReference>
<dbReference type="GO" id="GO:0000463">
    <property type="term" value="P:maturation of LSU-rRNA from tricistronic rRNA transcript (SSU-rRNA, 5.8S rRNA, LSU-rRNA)"/>
    <property type="evidence" value="ECO:0007669"/>
    <property type="project" value="InterPro"/>
</dbReference>
<dbReference type="CDD" id="cd01657">
    <property type="entry name" value="Ribosomal_L7_archeal_euk"/>
    <property type="match status" value="1"/>
</dbReference>
<dbReference type="FunFam" id="3.30.1390.20:FF:000002">
    <property type="entry name" value="60S ribosomal protein L7"/>
    <property type="match status" value="1"/>
</dbReference>
<dbReference type="FunFam" id="3.30.1390.20:FF:000003">
    <property type="entry name" value="60S ribosomal protein L7"/>
    <property type="match status" value="1"/>
</dbReference>
<dbReference type="Gene3D" id="3.30.1390.20">
    <property type="entry name" value="Ribosomal protein L30, ferredoxin-like fold domain"/>
    <property type="match status" value="1"/>
</dbReference>
<dbReference type="InterPro" id="IPR036919">
    <property type="entry name" value="Ribo_uL30_ferredoxin-like_sf"/>
</dbReference>
<dbReference type="InterPro" id="IPR039699">
    <property type="entry name" value="Ribosomal_uL30"/>
</dbReference>
<dbReference type="InterPro" id="IPR005998">
    <property type="entry name" value="Ribosomal_uL30_euk"/>
</dbReference>
<dbReference type="InterPro" id="IPR035808">
    <property type="entry name" value="Ribosomal_uL30_euk_arc"/>
</dbReference>
<dbReference type="InterPro" id="IPR016082">
    <property type="entry name" value="Ribosomal_uL30_ferredoxin-like"/>
</dbReference>
<dbReference type="InterPro" id="IPR012988">
    <property type="entry name" value="Ribosomal_uL30_N_euk"/>
</dbReference>
<dbReference type="NCBIfam" id="TIGR01310">
    <property type="entry name" value="uL30_euk"/>
    <property type="match status" value="1"/>
</dbReference>
<dbReference type="PANTHER" id="PTHR11524">
    <property type="entry name" value="60S RIBOSOMAL PROTEIN L7"/>
    <property type="match status" value="1"/>
</dbReference>
<dbReference type="PANTHER" id="PTHR11524:SF16">
    <property type="entry name" value="LARGE RIBOSOMAL SUBUNIT PROTEIN UL30"/>
    <property type="match status" value="1"/>
</dbReference>
<dbReference type="Pfam" id="PF00327">
    <property type="entry name" value="Ribosomal_L30"/>
    <property type="match status" value="1"/>
</dbReference>
<dbReference type="Pfam" id="PF08079">
    <property type="entry name" value="Ribosomal_L30_N"/>
    <property type="match status" value="1"/>
</dbReference>
<dbReference type="SUPFAM" id="SSF55129">
    <property type="entry name" value="Ribosomal protein L30p/L7e"/>
    <property type="match status" value="1"/>
</dbReference>
<name>RL7_DEBHA</name>
<protein>
    <recommendedName>
        <fullName evidence="2">Large ribosomal subunit protein uL30</fullName>
    </recommendedName>
    <alternativeName>
        <fullName>60S ribosomal protein L7</fullName>
    </alternativeName>
</protein>
<keyword id="KW-1185">Reference proteome</keyword>
<keyword id="KW-0687">Ribonucleoprotein</keyword>
<keyword id="KW-0689">Ribosomal protein</keyword>
<gene>
    <name type="primary">RPL7</name>
    <name type="ordered locus">DEHA2D02266g</name>
</gene>
<comment type="similarity">
    <text evidence="2">Belongs to the universal ribosomal protein uL30 family.</text>
</comment>
<sequence>MASTLKPETLVKKSKAQQKTAEERAAAKVVRQASNQEKRKIIFDRAAAYQKEYTDAERAVIKAKRDAKAAGSYYVDAQPKLVFVVRIKGINKIAPKPRKVLQLLRLTQINAGVFVRLTKATSELLKLAEPYIAYGYPNLSTIRHLVYKRGHGKINKQRIALSDNAIIEANLGKYGILSIEDLIHEIYTVGPNFKQANNFLWPFKLSNPNGGFRTRKFFHFIQGGDTGNREEFINALVKQMN</sequence>
<proteinExistence type="inferred from homology"/>
<organism>
    <name type="scientific">Debaryomyces hansenii (strain ATCC 36239 / CBS 767 / BCRC 21394 / JCM 1990 / NBRC 0083 / IGC 2968)</name>
    <name type="common">Yeast</name>
    <name type="synonym">Torulaspora hansenii</name>
    <dbReference type="NCBI Taxonomy" id="284592"/>
    <lineage>
        <taxon>Eukaryota</taxon>
        <taxon>Fungi</taxon>
        <taxon>Dikarya</taxon>
        <taxon>Ascomycota</taxon>
        <taxon>Saccharomycotina</taxon>
        <taxon>Pichiomycetes</taxon>
        <taxon>Debaryomycetaceae</taxon>
        <taxon>Debaryomyces</taxon>
    </lineage>
</organism>
<feature type="chain" id="PRO_0000104644" description="Large ribosomal subunit protein uL30">
    <location>
        <begin position="1"/>
        <end position="241"/>
    </location>
</feature>
<feature type="region of interest" description="Disordered" evidence="1">
    <location>
        <begin position="1"/>
        <end position="25"/>
    </location>
</feature>
<accession>Q6BTA4</accession>
<reference key="1">
    <citation type="journal article" date="2004" name="Nature">
        <title>Genome evolution in yeasts.</title>
        <authorList>
            <person name="Dujon B."/>
            <person name="Sherman D."/>
            <person name="Fischer G."/>
            <person name="Durrens P."/>
            <person name="Casaregola S."/>
            <person name="Lafontaine I."/>
            <person name="de Montigny J."/>
            <person name="Marck C."/>
            <person name="Neuveglise C."/>
            <person name="Talla E."/>
            <person name="Goffard N."/>
            <person name="Frangeul L."/>
            <person name="Aigle M."/>
            <person name="Anthouard V."/>
            <person name="Babour A."/>
            <person name="Barbe V."/>
            <person name="Barnay S."/>
            <person name="Blanchin S."/>
            <person name="Beckerich J.-M."/>
            <person name="Beyne E."/>
            <person name="Bleykasten C."/>
            <person name="Boisrame A."/>
            <person name="Boyer J."/>
            <person name="Cattolico L."/>
            <person name="Confanioleri F."/>
            <person name="de Daruvar A."/>
            <person name="Despons L."/>
            <person name="Fabre E."/>
            <person name="Fairhead C."/>
            <person name="Ferry-Dumazet H."/>
            <person name="Groppi A."/>
            <person name="Hantraye F."/>
            <person name="Hennequin C."/>
            <person name="Jauniaux N."/>
            <person name="Joyet P."/>
            <person name="Kachouri R."/>
            <person name="Kerrest A."/>
            <person name="Koszul R."/>
            <person name="Lemaire M."/>
            <person name="Lesur I."/>
            <person name="Ma L."/>
            <person name="Muller H."/>
            <person name="Nicaud J.-M."/>
            <person name="Nikolski M."/>
            <person name="Oztas S."/>
            <person name="Ozier-Kalogeropoulos O."/>
            <person name="Pellenz S."/>
            <person name="Potier S."/>
            <person name="Richard G.-F."/>
            <person name="Straub M.-L."/>
            <person name="Suleau A."/>
            <person name="Swennen D."/>
            <person name="Tekaia F."/>
            <person name="Wesolowski-Louvel M."/>
            <person name="Westhof E."/>
            <person name="Wirth B."/>
            <person name="Zeniou-Meyer M."/>
            <person name="Zivanovic Y."/>
            <person name="Bolotin-Fukuhara M."/>
            <person name="Thierry A."/>
            <person name="Bouchier C."/>
            <person name="Caudron B."/>
            <person name="Scarpelli C."/>
            <person name="Gaillardin C."/>
            <person name="Weissenbach J."/>
            <person name="Wincker P."/>
            <person name="Souciet J.-L."/>
        </authorList>
    </citation>
    <scope>NUCLEOTIDE SEQUENCE [LARGE SCALE GENOMIC DNA]</scope>
    <source>
        <strain>ATCC 36239 / CBS 767 / BCRC 21394 / JCM 1990 / NBRC 0083 / IGC 2968</strain>
    </source>
</reference>
<evidence type="ECO:0000256" key="1">
    <source>
        <dbReference type="SAM" id="MobiDB-lite"/>
    </source>
</evidence>
<evidence type="ECO:0000305" key="2"/>